<sequence>MLTLASKLKRDDGLKGSRASASTSDSTRRVSVRDKLLVKEVAELEANLPCTCKVHFPDPNKLHCFQLTVSPDEGYYQGGKFQFETEVPDAYNMVPPKVKCLTKIWHPNITETGEICLSLLREHSIDGTGWAPTRTLKDVVWGLNSLFTDLLNFDDPLNIEAAEHHLRDKEDFRDKVDEYIKRYAR</sequence>
<dbReference type="EC" id="2.3.2.34" evidence="1"/>
<dbReference type="EMBL" id="DY311915">
    <property type="status" value="NOT_ANNOTATED_CDS"/>
    <property type="molecule type" value="mRNA"/>
</dbReference>
<dbReference type="EMBL" id="BC086355">
    <property type="protein sequence ID" value="AAH86355.1"/>
    <property type="molecule type" value="mRNA"/>
</dbReference>
<dbReference type="RefSeq" id="NP_001008382.1">
    <molecule id="Q5U203-2"/>
    <property type="nucleotide sequence ID" value="NM_001008381.2"/>
</dbReference>
<dbReference type="RefSeq" id="NP_001386083.1">
    <molecule id="Q5U203-1"/>
    <property type="nucleotide sequence ID" value="NM_001399154.1"/>
</dbReference>
<dbReference type="RefSeq" id="NP_001386084.1">
    <molecule id="Q5U203-1"/>
    <property type="nucleotide sequence ID" value="NM_001399155.1"/>
</dbReference>
<dbReference type="RefSeq" id="NP_001386085.1">
    <molecule id="Q5U203-1"/>
    <property type="nucleotide sequence ID" value="NM_001399156.1"/>
</dbReference>
<dbReference type="RefSeq" id="XP_006245484.1">
    <property type="nucleotide sequence ID" value="XM_006245422.3"/>
</dbReference>
<dbReference type="RefSeq" id="XP_006245485.1">
    <molecule id="Q5U203-1"/>
    <property type="nucleotide sequence ID" value="XM_006245423.5"/>
</dbReference>
<dbReference type="RefSeq" id="XP_006245487.1">
    <property type="nucleotide sequence ID" value="XM_006245425.3"/>
</dbReference>
<dbReference type="RefSeq" id="XP_006245489.1">
    <property type="nucleotide sequence ID" value="XM_006245427.3"/>
</dbReference>
<dbReference type="RefSeq" id="XP_017452028.1">
    <molecule id="Q5U203-1"/>
    <property type="nucleotide sequence ID" value="XM_017596539.3"/>
</dbReference>
<dbReference type="RefSeq" id="XP_038939848.1">
    <molecule id="Q5U203-1"/>
    <property type="nucleotide sequence ID" value="XM_039083920.2"/>
</dbReference>
<dbReference type="RefSeq" id="XP_063123523.1">
    <molecule id="Q5U203-1"/>
    <property type="nucleotide sequence ID" value="XM_063267453.1"/>
</dbReference>
<dbReference type="SMR" id="Q5U203"/>
<dbReference type="FunCoup" id="Q5U203">
    <property type="interactions" value="1867"/>
</dbReference>
<dbReference type="STRING" id="10116.ENSRNOP00000027050"/>
<dbReference type="iPTMnet" id="Q5U203"/>
<dbReference type="PhosphoSitePlus" id="Q5U203"/>
<dbReference type="SwissPalm" id="Q5U203"/>
<dbReference type="PaxDb" id="10116-ENSRNOP00000027050"/>
<dbReference type="Ensembl" id="ENSRNOT00000027050.8">
    <molecule id="Q5U203-1"/>
    <property type="protein sequence ID" value="ENSRNOP00000027050.4"/>
    <property type="gene ID" value="ENSRNOG00000019953.8"/>
</dbReference>
<dbReference type="Ensembl" id="ENSRNOT00000042082.5">
    <molecule id="Q5U203-2"/>
    <property type="protein sequence ID" value="ENSRNOP00000040354.2"/>
    <property type="gene ID" value="ENSRNOG00000019953.8"/>
</dbReference>
<dbReference type="GeneID" id="363284"/>
<dbReference type="KEGG" id="rno:363284"/>
<dbReference type="UCSC" id="RGD:1307608">
    <molecule id="Q5U203-1"/>
    <property type="organism name" value="rat"/>
</dbReference>
<dbReference type="AGR" id="RGD:1307608"/>
<dbReference type="CTD" id="140739"/>
<dbReference type="RGD" id="1307608">
    <property type="gene designation" value="Ube2f"/>
</dbReference>
<dbReference type="eggNOG" id="KOG0420">
    <property type="taxonomic scope" value="Eukaryota"/>
</dbReference>
<dbReference type="GeneTree" id="ENSGT00940000154349"/>
<dbReference type="HOGENOM" id="CLU_030988_6_4_1"/>
<dbReference type="InParanoid" id="Q5U203"/>
<dbReference type="OMA" id="VMQYAKR"/>
<dbReference type="OrthoDB" id="10249039at2759"/>
<dbReference type="PhylomeDB" id="Q5U203"/>
<dbReference type="TreeFam" id="TF101125"/>
<dbReference type="Reactome" id="R-RNO-8951664">
    <property type="pathway name" value="Neddylation"/>
</dbReference>
<dbReference type="Reactome" id="R-RNO-983168">
    <property type="pathway name" value="Antigen processing: Ubiquitination &amp; Proteasome degradation"/>
</dbReference>
<dbReference type="UniPathway" id="UPA00885"/>
<dbReference type="PRO" id="PR:Q5U203"/>
<dbReference type="Proteomes" id="UP000002494">
    <property type="component" value="Chromosome 9"/>
</dbReference>
<dbReference type="Bgee" id="ENSRNOG00000019953">
    <property type="expression patterns" value="Expressed in duodenum and 20 other cell types or tissues"/>
</dbReference>
<dbReference type="GO" id="GO:0005829">
    <property type="term" value="C:cytosol"/>
    <property type="evidence" value="ECO:0000318"/>
    <property type="project" value="GO_Central"/>
</dbReference>
<dbReference type="GO" id="GO:0005634">
    <property type="term" value="C:nucleus"/>
    <property type="evidence" value="ECO:0000318"/>
    <property type="project" value="GO_Central"/>
</dbReference>
<dbReference type="GO" id="GO:0005524">
    <property type="term" value="F:ATP binding"/>
    <property type="evidence" value="ECO:0007669"/>
    <property type="project" value="UniProtKB-KW"/>
</dbReference>
<dbReference type="GO" id="GO:0061654">
    <property type="term" value="F:NEDD8 conjugating enzyme activity"/>
    <property type="evidence" value="ECO:0000250"/>
    <property type="project" value="UniProtKB"/>
</dbReference>
<dbReference type="GO" id="GO:0061663">
    <property type="term" value="F:NEDD8 ligase activity"/>
    <property type="evidence" value="ECO:0007669"/>
    <property type="project" value="UniProtKB-EC"/>
</dbReference>
<dbReference type="GO" id="GO:0019788">
    <property type="term" value="F:NEDD8 transferase activity"/>
    <property type="evidence" value="ECO:0000266"/>
    <property type="project" value="RGD"/>
</dbReference>
<dbReference type="GO" id="GO:0045116">
    <property type="term" value="P:protein neddylation"/>
    <property type="evidence" value="ECO:0000250"/>
    <property type="project" value="UniProtKB"/>
</dbReference>
<dbReference type="CDD" id="cd23794">
    <property type="entry name" value="UBCc_UBE2F_UBE2M"/>
    <property type="match status" value="1"/>
</dbReference>
<dbReference type="FunFam" id="3.10.110.10:FF:000033">
    <property type="entry name" value="NEDD8-conjugating enzyme UBE2F"/>
    <property type="match status" value="1"/>
</dbReference>
<dbReference type="Gene3D" id="3.10.110.10">
    <property type="entry name" value="Ubiquitin Conjugating Enzyme"/>
    <property type="match status" value="1"/>
</dbReference>
<dbReference type="InterPro" id="IPR050113">
    <property type="entry name" value="Ub_conjugating_enzyme"/>
</dbReference>
<dbReference type="InterPro" id="IPR000608">
    <property type="entry name" value="UBQ-conjugat_E2_core"/>
</dbReference>
<dbReference type="InterPro" id="IPR023313">
    <property type="entry name" value="UBQ-conjugating_AS"/>
</dbReference>
<dbReference type="InterPro" id="IPR016135">
    <property type="entry name" value="UBQ-conjugating_enzyme/RWD"/>
</dbReference>
<dbReference type="PANTHER" id="PTHR24067">
    <property type="entry name" value="UBIQUITIN-CONJUGATING ENZYME E2"/>
    <property type="match status" value="1"/>
</dbReference>
<dbReference type="Pfam" id="PF00179">
    <property type="entry name" value="UQ_con"/>
    <property type="match status" value="1"/>
</dbReference>
<dbReference type="SMART" id="SM00212">
    <property type="entry name" value="UBCc"/>
    <property type="match status" value="1"/>
</dbReference>
<dbReference type="SUPFAM" id="SSF54495">
    <property type="entry name" value="UBC-like"/>
    <property type="match status" value="1"/>
</dbReference>
<dbReference type="PROSITE" id="PS00183">
    <property type="entry name" value="UBC_1"/>
    <property type="match status" value="1"/>
</dbReference>
<dbReference type="PROSITE" id="PS50127">
    <property type="entry name" value="UBC_2"/>
    <property type="match status" value="1"/>
</dbReference>
<gene>
    <name type="primary">Ube2f</name>
</gene>
<protein>
    <recommendedName>
        <fullName>NEDD8-conjugating enzyme UBE2F</fullName>
        <ecNumber evidence="1">2.3.2.34</ecNumber>
    </recommendedName>
    <alternativeName>
        <fullName>NEDD8 carrier protein UBE2F</fullName>
    </alternativeName>
    <alternativeName>
        <fullName>NEDD8 protein ligase UBE2F</fullName>
    </alternativeName>
    <alternativeName>
        <fullName>RING-type E3 NEDD8 transferase UBE2F</fullName>
    </alternativeName>
    <alternativeName>
        <fullName>Ubiquitin-conjugating enzyme E2 F</fullName>
    </alternativeName>
</protein>
<comment type="function">
    <text evidence="1">Accepts the ubiquitin-like protein NEDD8 from the UBA3-NAE1 E1 complex and catalyzes its covalent attachment to other proteins. Together with the E3 ubiquitin ligase RNF7/RBX2, specifically neddylates cullin-5 (CUL5). Does not neddylate CUL1, CUL2, CUL3, CUL4A or CUL4B. Mediates neddylation of the CUL9-RBX1 complex (By similarity).</text>
</comment>
<comment type="catalytic activity">
    <reaction evidence="1">
        <text>[E1 NEDD8-activating enzyme]-S-[NEDD8 protein]-yl-L-cysteine + [E2 NEDD8-conjugating enzyme]-L-cysteine = [E1 NEDD8-activating enzyme]-L-cysteine + [E2 NEDD8-conjugating enzyme]-S-[NEDD8-protein]-yl-L-cysteine.</text>
        <dbReference type="EC" id="2.3.2.34"/>
    </reaction>
</comment>
<comment type="pathway">
    <text evidence="1">Protein modification; protein neddylation.</text>
</comment>
<comment type="subunit">
    <text evidence="1">Interacts with UBA3 and RBX2. Interacts (N-terminally acetylated form) with (via DCUN1 domain) DCUN1D1, DCUN1D2, DCUN1D3, DCUN1D4 and DCUN1D5 (By similarity).</text>
</comment>
<comment type="alternative products">
    <event type="alternative splicing"/>
    <isoform>
        <id>Q5U203-1</id>
        <name>1</name>
        <sequence type="displayed"/>
    </isoform>
    <isoform>
        <id>Q5U203-2</id>
        <name>2</name>
        <sequence type="described" ref="VSP_037303"/>
    </isoform>
</comment>
<comment type="PTM">
    <text evidence="1">The acetylation of Met-1 increases affinity for DCUN1D3 by about 2 orders of magnitude and is crucial for NEDD8 transfer to cullins.</text>
</comment>
<comment type="similarity">
    <text evidence="2">Belongs to the ubiquitin-conjugating enzyme family. UBE2F subfamily.</text>
</comment>
<feature type="chain" id="PRO_0000374072" description="NEDD8-conjugating enzyme UBE2F">
    <location>
        <begin position="1"/>
        <end position="185"/>
    </location>
</feature>
<feature type="domain" description="UBC core" evidence="2">
    <location>
        <begin position="32"/>
        <end position="185"/>
    </location>
</feature>
<feature type="active site" description="Glycyl thioester intermediate" evidence="2 3">
    <location>
        <position position="116"/>
    </location>
</feature>
<feature type="modified residue" description="N-acetylmethionine" evidence="1">
    <location>
        <position position="1"/>
    </location>
</feature>
<feature type="splice variant" id="VSP_037303" description="In isoform 2." evidence="4">
    <original>CTCKVHFPDPNKLHCFQLTVSPD</original>
    <variation>Y</variation>
    <location>
        <begin position="50"/>
        <end position="72"/>
    </location>
</feature>
<feature type="sequence conflict" description="In Ref. 1; DY311915." evidence="5" ref="1">
    <original>K</original>
    <variation>Q</variation>
    <location>
        <position position="181"/>
    </location>
</feature>
<proteinExistence type="evidence at transcript level"/>
<reference key="1">
    <citation type="journal article" date="2004" name="Genome Res.">
        <title>The status, quality, and expansion of the NIH full-length cDNA project: the Mammalian Gene Collection (MGC).</title>
        <authorList>
            <consortium name="The MGC Project Team"/>
        </authorList>
    </citation>
    <scope>NUCLEOTIDE SEQUENCE [LARGE SCALE MRNA] (ISOFORMS 1 AND 2)</scope>
    <source>
        <tissue>Ovary</tissue>
    </source>
</reference>
<organism>
    <name type="scientific">Rattus norvegicus</name>
    <name type="common">Rat</name>
    <dbReference type="NCBI Taxonomy" id="10116"/>
    <lineage>
        <taxon>Eukaryota</taxon>
        <taxon>Metazoa</taxon>
        <taxon>Chordata</taxon>
        <taxon>Craniata</taxon>
        <taxon>Vertebrata</taxon>
        <taxon>Euteleostomi</taxon>
        <taxon>Mammalia</taxon>
        <taxon>Eutheria</taxon>
        <taxon>Euarchontoglires</taxon>
        <taxon>Glires</taxon>
        <taxon>Rodentia</taxon>
        <taxon>Myomorpha</taxon>
        <taxon>Muroidea</taxon>
        <taxon>Muridae</taxon>
        <taxon>Murinae</taxon>
        <taxon>Rattus</taxon>
    </lineage>
</organism>
<name>UBE2F_RAT</name>
<evidence type="ECO:0000250" key="1">
    <source>
        <dbReference type="UniProtKB" id="Q969M7"/>
    </source>
</evidence>
<evidence type="ECO:0000255" key="2">
    <source>
        <dbReference type="PROSITE-ProRule" id="PRU00388"/>
    </source>
</evidence>
<evidence type="ECO:0000255" key="3">
    <source>
        <dbReference type="PROSITE-ProRule" id="PRU10133"/>
    </source>
</evidence>
<evidence type="ECO:0000303" key="4">
    <source>
    </source>
</evidence>
<evidence type="ECO:0000305" key="5"/>
<accession>Q5U203</accession>
<keyword id="KW-0007">Acetylation</keyword>
<keyword id="KW-0025">Alternative splicing</keyword>
<keyword id="KW-0067">ATP-binding</keyword>
<keyword id="KW-0547">Nucleotide-binding</keyword>
<keyword id="KW-1185">Reference proteome</keyword>
<keyword id="KW-0808">Transferase</keyword>
<keyword id="KW-0833">Ubl conjugation pathway</keyword>